<gene>
    <name type="primary">vps10</name>
    <name type="ORF">B16B8.180</name>
    <name type="ORF">NCU02669</name>
</gene>
<comment type="function">
    <text evidence="1">Functions as a sorting receptor in the Golgi compartment required for the intracellular sorting and delivery of soluble vacuolar proteins, like carboxypeptidase Y (CPY) and proteinase A. Executes multiple rounds of sorting by cycling between the late Golgi and a prevacuolar endosome-like compartment (By similarity).</text>
</comment>
<comment type="subcellular location">
    <subcellularLocation>
        <location evidence="1">Golgi apparatus</location>
        <location evidence="1">trans-Golgi network membrane</location>
        <topology evidence="1">Multi-pass membrane protein</topology>
    </subcellularLocation>
    <subcellularLocation>
        <location evidence="1">Prevacuolar compartment membrane</location>
        <topology evidence="1">Multi-pass membrane protein</topology>
    </subcellularLocation>
    <text evidence="1">Cycles between the Golgi apparatus and the prevacuolar compartment.</text>
</comment>
<comment type="similarity">
    <text evidence="3">Belongs to the VPS10-related sortilin family.</text>
</comment>
<feature type="signal peptide" evidence="2">
    <location>
        <begin position="1"/>
        <end position="24"/>
    </location>
</feature>
<feature type="chain" id="PRO_0000407526" description="Vacuolar protein sorting/targeting protein 10">
    <location>
        <begin position="25"/>
        <end position="1528"/>
    </location>
</feature>
<feature type="topological domain" description="Lumenal" evidence="2">
    <location>
        <begin position="25"/>
        <end position="1385"/>
    </location>
</feature>
<feature type="transmembrane region" description="Helical" evidence="2">
    <location>
        <begin position="1386"/>
        <end position="1406"/>
    </location>
</feature>
<feature type="topological domain" description="Cytoplasmic" evidence="2">
    <location>
        <begin position="1407"/>
        <end position="1440"/>
    </location>
</feature>
<feature type="transmembrane region" description="Helical" evidence="2">
    <location>
        <begin position="1441"/>
        <end position="1461"/>
    </location>
</feature>
<feature type="topological domain" description="Lumenal" evidence="2">
    <location>
        <begin position="1462"/>
        <end position="1528"/>
    </location>
</feature>
<feature type="repeat" description="BNR 1">
    <location>
        <begin position="62"/>
        <end position="72"/>
    </location>
</feature>
<feature type="repeat" description="BNR 2">
    <location>
        <begin position="105"/>
        <end position="115"/>
    </location>
</feature>
<feature type="repeat" description="BNR 3">
    <location>
        <begin position="450"/>
        <end position="461"/>
    </location>
</feature>
<feature type="repeat" description="BNR 4">
    <location>
        <begin position="494"/>
        <end position="502"/>
    </location>
</feature>
<feature type="repeat" description="BNR 5">
    <location>
        <begin position="749"/>
        <end position="759"/>
    </location>
</feature>
<feature type="repeat" description="BNR 6">
    <location>
        <begin position="1136"/>
        <end position="1146"/>
    </location>
</feature>
<feature type="repeat" description="BNR 7">
    <location>
        <begin position="1179"/>
        <end position="1189"/>
    </location>
</feature>
<feature type="glycosylation site" description="N-linked (GlcNAc...) asparagine" evidence="2">
    <location>
        <position position="308"/>
    </location>
</feature>
<feature type="glycosylation site" description="N-linked (GlcNAc...) asparagine" evidence="2">
    <location>
        <position position="735"/>
    </location>
</feature>
<feature type="glycosylation site" description="N-linked (GlcNAc...) asparagine" evidence="2">
    <location>
        <position position="899"/>
    </location>
</feature>
<feature type="glycosylation site" description="N-linked (GlcNAc...) asparagine" evidence="2">
    <location>
        <position position="1006"/>
    </location>
</feature>
<feature type="glycosylation site" description="N-linked (GlcNAc...) asparagine" evidence="2">
    <location>
        <position position="1244"/>
    </location>
</feature>
<feature type="glycosylation site" description="N-linked (GlcNAc...) asparagine" evidence="2">
    <location>
        <position position="1295"/>
    </location>
</feature>
<name>VPS10_NEUCR</name>
<evidence type="ECO:0000250" key="1"/>
<evidence type="ECO:0000255" key="2"/>
<evidence type="ECO:0000305" key="3"/>
<keyword id="KW-0325">Glycoprotein</keyword>
<keyword id="KW-0333">Golgi apparatus</keyword>
<keyword id="KW-0472">Membrane</keyword>
<keyword id="KW-0653">Protein transport</keyword>
<keyword id="KW-0675">Receptor</keyword>
<keyword id="KW-1185">Reference proteome</keyword>
<keyword id="KW-0677">Repeat</keyword>
<keyword id="KW-0732">Signal</keyword>
<keyword id="KW-0812">Transmembrane</keyword>
<keyword id="KW-1133">Transmembrane helix</keyword>
<keyword id="KW-0813">Transport</keyword>
<reference key="1">
    <citation type="journal article" date="2003" name="Nucleic Acids Res.">
        <title>What's in the genome of a filamentous fungus? Analysis of the Neurospora genome sequence.</title>
        <authorList>
            <person name="Mannhaupt G."/>
            <person name="Montrone C."/>
            <person name="Haase D."/>
            <person name="Mewes H.-W."/>
            <person name="Aign V."/>
            <person name="Hoheisel J.D."/>
            <person name="Fartmann B."/>
            <person name="Nyakatura G."/>
            <person name="Kempken F."/>
            <person name="Maier J."/>
            <person name="Schulte U."/>
        </authorList>
    </citation>
    <scope>NUCLEOTIDE SEQUENCE [LARGE SCALE GENOMIC DNA]</scope>
    <source>
        <strain>ATCC 24698 / 74-OR23-1A / CBS 708.71 / DSM 1257 / FGSC 987</strain>
    </source>
</reference>
<reference key="2">
    <citation type="journal article" date="2003" name="Nature">
        <title>The genome sequence of the filamentous fungus Neurospora crassa.</title>
        <authorList>
            <person name="Galagan J.E."/>
            <person name="Calvo S.E."/>
            <person name="Borkovich K.A."/>
            <person name="Selker E.U."/>
            <person name="Read N.D."/>
            <person name="Jaffe D.B."/>
            <person name="FitzHugh W."/>
            <person name="Ma L.-J."/>
            <person name="Smirnov S."/>
            <person name="Purcell S."/>
            <person name="Rehman B."/>
            <person name="Elkins T."/>
            <person name="Engels R."/>
            <person name="Wang S."/>
            <person name="Nielsen C.B."/>
            <person name="Butler J."/>
            <person name="Endrizzi M."/>
            <person name="Qui D."/>
            <person name="Ianakiev P."/>
            <person name="Bell-Pedersen D."/>
            <person name="Nelson M.A."/>
            <person name="Werner-Washburne M."/>
            <person name="Selitrennikoff C.P."/>
            <person name="Kinsey J.A."/>
            <person name="Braun E.L."/>
            <person name="Zelter A."/>
            <person name="Schulte U."/>
            <person name="Kothe G.O."/>
            <person name="Jedd G."/>
            <person name="Mewes H.-W."/>
            <person name="Staben C."/>
            <person name="Marcotte E."/>
            <person name="Greenberg D."/>
            <person name="Roy A."/>
            <person name="Foley K."/>
            <person name="Naylor J."/>
            <person name="Stange-Thomann N."/>
            <person name="Barrett R."/>
            <person name="Gnerre S."/>
            <person name="Kamal M."/>
            <person name="Kamvysselis M."/>
            <person name="Mauceli E.W."/>
            <person name="Bielke C."/>
            <person name="Rudd S."/>
            <person name="Frishman D."/>
            <person name="Krystofova S."/>
            <person name="Rasmussen C."/>
            <person name="Metzenberg R.L."/>
            <person name="Perkins D.D."/>
            <person name="Kroken S."/>
            <person name="Cogoni C."/>
            <person name="Macino G."/>
            <person name="Catcheside D.E.A."/>
            <person name="Li W."/>
            <person name="Pratt R.J."/>
            <person name="Osmani S.A."/>
            <person name="DeSouza C.P.C."/>
            <person name="Glass N.L."/>
            <person name="Orbach M.J."/>
            <person name="Berglund J.A."/>
            <person name="Voelker R."/>
            <person name="Yarden O."/>
            <person name="Plamann M."/>
            <person name="Seiler S."/>
            <person name="Dunlap J.C."/>
            <person name="Radford A."/>
            <person name="Aramayo R."/>
            <person name="Natvig D.O."/>
            <person name="Alex L.A."/>
            <person name="Mannhaupt G."/>
            <person name="Ebbole D.J."/>
            <person name="Freitag M."/>
            <person name="Paulsen I."/>
            <person name="Sachs M.S."/>
            <person name="Lander E.S."/>
            <person name="Nusbaum C."/>
            <person name="Birren B.W."/>
        </authorList>
    </citation>
    <scope>NUCLEOTIDE SEQUENCE [LARGE SCALE GENOMIC DNA]</scope>
    <source>
        <strain>ATCC 24698 / 74-OR23-1A / CBS 708.71 / DSM 1257 / FGSC 987</strain>
    </source>
</reference>
<dbReference type="EMBL" id="BX842634">
    <property type="protein sequence ID" value="CAE76478.1"/>
    <property type="molecule type" value="Genomic_DNA"/>
</dbReference>
<dbReference type="EMBL" id="CM002236">
    <property type="protein sequence ID" value="EAA36206.1"/>
    <property type="molecule type" value="Genomic_DNA"/>
</dbReference>
<dbReference type="RefSeq" id="XP_965442.1">
    <property type="nucleotide sequence ID" value="XM_960349.3"/>
</dbReference>
<dbReference type="SMR" id="Q7SH60"/>
<dbReference type="FunCoup" id="Q7SH60">
    <property type="interactions" value="178"/>
</dbReference>
<dbReference type="STRING" id="367110.Q7SH60"/>
<dbReference type="GlyCosmos" id="Q7SH60">
    <property type="glycosylation" value="6 sites, No reported glycans"/>
</dbReference>
<dbReference type="PaxDb" id="5141-EFNCRP00000002058"/>
<dbReference type="EnsemblFungi" id="EAA36206">
    <property type="protein sequence ID" value="EAA36206"/>
    <property type="gene ID" value="NCU02669"/>
</dbReference>
<dbReference type="GeneID" id="3881583"/>
<dbReference type="KEGG" id="ncr:NCU02669"/>
<dbReference type="VEuPathDB" id="FungiDB:NCU02669"/>
<dbReference type="HOGENOM" id="CLU_000700_0_0_1"/>
<dbReference type="InParanoid" id="Q7SH60"/>
<dbReference type="OrthoDB" id="443634at2759"/>
<dbReference type="Proteomes" id="UP000001805">
    <property type="component" value="Chromosome 1, Linkage Group I"/>
</dbReference>
<dbReference type="GO" id="GO:0005829">
    <property type="term" value="C:cytosol"/>
    <property type="evidence" value="ECO:0007669"/>
    <property type="project" value="GOC"/>
</dbReference>
<dbReference type="GO" id="GO:0005794">
    <property type="term" value="C:Golgi apparatus"/>
    <property type="evidence" value="ECO:0000318"/>
    <property type="project" value="GO_Central"/>
</dbReference>
<dbReference type="GO" id="GO:0016020">
    <property type="term" value="C:membrane"/>
    <property type="evidence" value="ECO:0000318"/>
    <property type="project" value="GO_Central"/>
</dbReference>
<dbReference type="GO" id="GO:0006895">
    <property type="term" value="P:Golgi to endosome transport"/>
    <property type="evidence" value="ECO:0000318"/>
    <property type="project" value="GO_Central"/>
</dbReference>
<dbReference type="GO" id="GO:0006896">
    <property type="term" value="P:Golgi to vacuole transport"/>
    <property type="evidence" value="ECO:0000318"/>
    <property type="project" value="GO_Central"/>
</dbReference>
<dbReference type="GO" id="GO:0006623">
    <property type="term" value="P:protein targeting to vacuole"/>
    <property type="evidence" value="ECO:0000318"/>
    <property type="project" value="GO_Central"/>
</dbReference>
<dbReference type="CDD" id="cd15482">
    <property type="entry name" value="Sialidase_non-viral"/>
    <property type="match status" value="2"/>
</dbReference>
<dbReference type="FunFam" id="2.130.10.10:FF:000676">
    <property type="entry name" value="Sortilin"/>
    <property type="match status" value="1"/>
</dbReference>
<dbReference type="FunFam" id="3.30.60.270:FF:000005">
    <property type="entry name" value="Sortilin"/>
    <property type="match status" value="2"/>
</dbReference>
<dbReference type="FunFam" id="2.10.70.80:FF:000001">
    <property type="entry name" value="Sortilin-related VPS10 domain-containing receptor 1"/>
    <property type="match status" value="1"/>
</dbReference>
<dbReference type="Gene3D" id="2.10.70.80">
    <property type="match status" value="2"/>
</dbReference>
<dbReference type="Gene3D" id="2.120.10.10">
    <property type="match status" value="1"/>
</dbReference>
<dbReference type="Gene3D" id="3.30.60.270">
    <property type="match status" value="2"/>
</dbReference>
<dbReference type="Gene3D" id="2.130.10.10">
    <property type="entry name" value="YVTN repeat-like/Quinoprotein amine dehydrogenase"/>
    <property type="match status" value="2"/>
</dbReference>
<dbReference type="InterPro" id="IPR031777">
    <property type="entry name" value="Sortilin_C"/>
</dbReference>
<dbReference type="InterPro" id="IPR031778">
    <property type="entry name" value="Sortilin_N"/>
</dbReference>
<dbReference type="InterPro" id="IPR006581">
    <property type="entry name" value="VPS10"/>
</dbReference>
<dbReference type="InterPro" id="IPR050310">
    <property type="entry name" value="VPS10-sortilin"/>
</dbReference>
<dbReference type="InterPro" id="IPR015943">
    <property type="entry name" value="WD40/YVTN_repeat-like_dom_sf"/>
</dbReference>
<dbReference type="PANTHER" id="PTHR12106">
    <property type="entry name" value="SORTILIN RELATED"/>
    <property type="match status" value="1"/>
</dbReference>
<dbReference type="PANTHER" id="PTHR12106:SF27">
    <property type="entry name" value="SORTILIN-RELATED RECEPTOR"/>
    <property type="match status" value="1"/>
</dbReference>
<dbReference type="Pfam" id="PF15902">
    <property type="entry name" value="Sortilin-Vps10"/>
    <property type="match status" value="2"/>
</dbReference>
<dbReference type="Pfam" id="PF15901">
    <property type="entry name" value="Sortilin_C"/>
    <property type="match status" value="2"/>
</dbReference>
<dbReference type="SMART" id="SM00602">
    <property type="entry name" value="VPS10"/>
    <property type="match status" value="2"/>
</dbReference>
<dbReference type="SUPFAM" id="SSF110296">
    <property type="entry name" value="Oligoxyloglucan reducing end-specific cellobiohydrolase"/>
    <property type="match status" value="2"/>
</dbReference>
<proteinExistence type="inferred from homology"/>
<sequence length="1528" mass="172085">MRVRGALQAAALLASALWAAPLLAKDHPTFKTTKLDTQPNNLNYFEGSDTILFHDTHKSNLWRSDDAGATWSVVKDIPDGKVARLYMHDFDSKRAFAITDGRKHYRTTDQGKTWKTFEVDAAWDTERFDILHFHATDPDRIIFNGLHCLGFLCEEVSLYTIDDFETPAKPLRPDTLGCWWAKSSPVFTTGDSDLDKDRILCIIMGVDSIFSEDRRLVISDDFFKADKEGNIQEFEPNLAGDKPVRGVVNVAAVKRYFMVATTSANTDEMALFISTDTKKWQRAMFPNAHDDHDHKIVQEAYTVLESTNYSIQLNVMTGSKSAPMGIMFTSNYDGTYFSENLEYTNLNMFGHVDFEKIAGIQGIFLVNKVDNGKEVDEKPSTKKKLVSEITFDDGRTFDKVTADGKRIHLHSVTELNNVGRVFSSPAPGLVMANGNTGDYLGDYWEDANLYVSDDAGKTWKKALKGPHKYEFGDQGSILVAVRDSKEEDISEISYSLDHGENWVDEKLPDDLKIQPWILTTTPDSTGLQFVLIGKAKGAWHVIHIDFEGLHEATCKESDMEEWHARVDKDGEPTCIMGHTQTYPRRKKDAKCFLKKEFKLAEVETKDCDCTDQDYECDYNFERNDKGICVSRGPIPIPEGACKEGDRNGKFLGTSGYRKIPGNTCKDTKETKDKYKDVERSCGDGIGAPPDEATGELQQVDTKGKFGHWTHWEKHYLERGESSSDSSETIIMRGMNRTVDDSGPKVGPIWRTTDHGKKWDKVDFFKDDEVISIVPHPTVKDWVFFLTEGKKLIYTPDRGKRFRTFEVPQPADFEAAANGIFPLIFHPDKPNWLIWLGKKCESKNDCYRVAYGTKDGERWETLARDVYRCEFTGAEAYGRKYANRALEQILCLKHEKEGDNDSALQLVSSNDWFNQDERVRLKEAKEFATMAEFIVVATEDTEKKTLRAYASLDGSLYSEAKFPFGFEVPHQHAYTVLDSSTHAVNLFVATRMEGDKSLGTILKSNSNGTSYVVSVKNVNCDQYFYVDFEKMVGLEGVALVNVVVNPDAKSSAPKKLQTKITHNDGAQWAYLPTPRKDEFGKFPCSSSGTEKCALHIQGYTQRRDRGKTYSSEGAVGVMFGWGNVGDSLGSIKDADTFMTTDAGITWKRVKKGRWNWALGDQGSIIVLVPIRGQKTDTLEYSLDQGATWKKHTFSKEKVDIWDLTTTRSGNSQNFLIWGENSDGLFTTKIDFTKFTDHVCKYDPENLSKSDYQIFSPKHPLQPDGCLFGHVSQYLRKKPGLKCFNDFRLDPLYSKQNCTCTRSDFECDFNYELDKHGQCSLVSGLKPKDHKLWCKEHPDEIEYYEPTGFRRIPLTTCQGGLDFEKAAAVHPCPGHEDDFERKHRVSGIAIFFAVVLPVAAASAIGWWVYRHWDGKFGQIRLGEQGASTMEFFDADRPWVKYPVIALSAVVALAGAMPLVLGALWRTAKSTAERWGIGGGGGGRGGWSRLDGGGASRTFRTRDSFARGRGDYTIVDEDEGELLGEESDEEV</sequence>
<organism>
    <name type="scientific">Neurospora crassa (strain ATCC 24698 / 74-OR23-1A / CBS 708.71 / DSM 1257 / FGSC 987)</name>
    <dbReference type="NCBI Taxonomy" id="367110"/>
    <lineage>
        <taxon>Eukaryota</taxon>
        <taxon>Fungi</taxon>
        <taxon>Dikarya</taxon>
        <taxon>Ascomycota</taxon>
        <taxon>Pezizomycotina</taxon>
        <taxon>Sordariomycetes</taxon>
        <taxon>Sordariomycetidae</taxon>
        <taxon>Sordariales</taxon>
        <taxon>Sordariaceae</taxon>
        <taxon>Neurospora</taxon>
    </lineage>
</organism>
<protein>
    <recommendedName>
        <fullName>Vacuolar protein sorting/targeting protein 10</fullName>
    </recommendedName>
    <alternativeName>
        <fullName>Carboxypeptidase Y receptor</fullName>
        <shortName>CPY receptor</shortName>
    </alternativeName>
    <alternativeName>
        <fullName>Sortilin vps10</fullName>
    </alternativeName>
    <alternativeName>
        <fullName>Vacuolar carboxypeptidase sorting receptor vps10</fullName>
    </alternativeName>
</protein>
<accession>Q7SH60</accession>